<dbReference type="EMBL" id="AE015925">
    <property type="protein sequence ID" value="AAP04852.1"/>
    <property type="molecule type" value="Genomic_DNA"/>
</dbReference>
<dbReference type="RefSeq" id="WP_011006073.1">
    <property type="nucleotide sequence ID" value="NC_003361.3"/>
</dbReference>
<dbReference type="SMR" id="Q824P4"/>
<dbReference type="STRING" id="227941.CCA_00100"/>
<dbReference type="KEGG" id="cca:CCA_00100"/>
<dbReference type="eggNOG" id="COG0197">
    <property type="taxonomic scope" value="Bacteria"/>
</dbReference>
<dbReference type="HOGENOM" id="CLU_078858_2_1_0"/>
<dbReference type="OrthoDB" id="9802589at2"/>
<dbReference type="Proteomes" id="UP000002193">
    <property type="component" value="Chromosome"/>
</dbReference>
<dbReference type="GO" id="GO:0022625">
    <property type="term" value="C:cytosolic large ribosomal subunit"/>
    <property type="evidence" value="ECO:0007669"/>
    <property type="project" value="TreeGrafter"/>
</dbReference>
<dbReference type="GO" id="GO:0019843">
    <property type="term" value="F:rRNA binding"/>
    <property type="evidence" value="ECO:0007669"/>
    <property type="project" value="UniProtKB-UniRule"/>
</dbReference>
<dbReference type="GO" id="GO:0003735">
    <property type="term" value="F:structural constituent of ribosome"/>
    <property type="evidence" value="ECO:0007669"/>
    <property type="project" value="InterPro"/>
</dbReference>
<dbReference type="GO" id="GO:0000049">
    <property type="term" value="F:tRNA binding"/>
    <property type="evidence" value="ECO:0007669"/>
    <property type="project" value="UniProtKB-KW"/>
</dbReference>
<dbReference type="GO" id="GO:0006412">
    <property type="term" value="P:translation"/>
    <property type="evidence" value="ECO:0007669"/>
    <property type="project" value="UniProtKB-UniRule"/>
</dbReference>
<dbReference type="CDD" id="cd01433">
    <property type="entry name" value="Ribosomal_L16_L10e"/>
    <property type="match status" value="1"/>
</dbReference>
<dbReference type="FunFam" id="3.90.1170.10:FF:000001">
    <property type="entry name" value="50S ribosomal protein L16"/>
    <property type="match status" value="1"/>
</dbReference>
<dbReference type="Gene3D" id="3.90.1170.10">
    <property type="entry name" value="Ribosomal protein L10e/L16"/>
    <property type="match status" value="1"/>
</dbReference>
<dbReference type="HAMAP" id="MF_01342">
    <property type="entry name" value="Ribosomal_uL16"/>
    <property type="match status" value="1"/>
</dbReference>
<dbReference type="InterPro" id="IPR047873">
    <property type="entry name" value="Ribosomal_uL16"/>
</dbReference>
<dbReference type="InterPro" id="IPR000114">
    <property type="entry name" value="Ribosomal_uL16_bact-type"/>
</dbReference>
<dbReference type="InterPro" id="IPR020798">
    <property type="entry name" value="Ribosomal_uL16_CS"/>
</dbReference>
<dbReference type="InterPro" id="IPR016180">
    <property type="entry name" value="Ribosomal_uL16_dom"/>
</dbReference>
<dbReference type="InterPro" id="IPR036920">
    <property type="entry name" value="Ribosomal_uL16_sf"/>
</dbReference>
<dbReference type="NCBIfam" id="TIGR01164">
    <property type="entry name" value="rplP_bact"/>
    <property type="match status" value="1"/>
</dbReference>
<dbReference type="PANTHER" id="PTHR12220">
    <property type="entry name" value="50S/60S RIBOSOMAL PROTEIN L16"/>
    <property type="match status" value="1"/>
</dbReference>
<dbReference type="PANTHER" id="PTHR12220:SF13">
    <property type="entry name" value="LARGE RIBOSOMAL SUBUNIT PROTEIN UL16M"/>
    <property type="match status" value="1"/>
</dbReference>
<dbReference type="Pfam" id="PF00252">
    <property type="entry name" value="Ribosomal_L16"/>
    <property type="match status" value="1"/>
</dbReference>
<dbReference type="PRINTS" id="PR00060">
    <property type="entry name" value="RIBOSOMALL16"/>
</dbReference>
<dbReference type="SUPFAM" id="SSF54686">
    <property type="entry name" value="Ribosomal protein L16p/L10e"/>
    <property type="match status" value="1"/>
</dbReference>
<dbReference type="PROSITE" id="PS00586">
    <property type="entry name" value="RIBOSOMAL_L16_1"/>
    <property type="match status" value="1"/>
</dbReference>
<dbReference type="PROSITE" id="PS00701">
    <property type="entry name" value="RIBOSOMAL_L16_2"/>
    <property type="match status" value="1"/>
</dbReference>
<sequence>MLMPKRTKFRKQQKGQFAGLSKGATFVDFGEFGMQTLERGWVTSRQIEACRVAINRYLKRKGKVWIRVFPDKSVTKKPAETRMGKGKGAPDHWVAVVRPGRILFEVANVSREDAQDALRRAAAKLGIRTRFVKRVERV</sequence>
<comment type="function">
    <text evidence="1">Binds 23S rRNA and is also seen to make contacts with the A and possibly P site tRNAs.</text>
</comment>
<comment type="subunit">
    <text evidence="1">Part of the 50S ribosomal subunit.</text>
</comment>
<comment type="similarity">
    <text evidence="1">Belongs to the universal ribosomal protein uL16 family.</text>
</comment>
<feature type="chain" id="PRO_0000062078" description="Large ribosomal subunit protein uL16">
    <location>
        <begin position="1"/>
        <end position="138"/>
    </location>
</feature>
<accession>Q824P4</accession>
<gene>
    <name evidence="1" type="primary">rplP</name>
    <name type="ordered locus">CCA_00100</name>
</gene>
<name>RL16_CHLCV</name>
<keyword id="KW-0687">Ribonucleoprotein</keyword>
<keyword id="KW-0689">Ribosomal protein</keyword>
<keyword id="KW-0694">RNA-binding</keyword>
<keyword id="KW-0699">rRNA-binding</keyword>
<keyword id="KW-0820">tRNA-binding</keyword>
<organism>
    <name type="scientific">Chlamydia caviae (strain ATCC VR-813 / DSM 19441 / 03DC25 / GPIC)</name>
    <name type="common">Chlamydophila caviae</name>
    <dbReference type="NCBI Taxonomy" id="227941"/>
    <lineage>
        <taxon>Bacteria</taxon>
        <taxon>Pseudomonadati</taxon>
        <taxon>Chlamydiota</taxon>
        <taxon>Chlamydiia</taxon>
        <taxon>Chlamydiales</taxon>
        <taxon>Chlamydiaceae</taxon>
        <taxon>Chlamydia/Chlamydophila group</taxon>
        <taxon>Chlamydia</taxon>
    </lineage>
</organism>
<reference key="1">
    <citation type="journal article" date="2003" name="Nucleic Acids Res.">
        <title>Genome sequence of Chlamydophila caviae (Chlamydia psittaci GPIC): examining the role of niche-specific genes in the evolution of the Chlamydiaceae.</title>
        <authorList>
            <person name="Read T.D."/>
            <person name="Myers G.S.A."/>
            <person name="Brunham R.C."/>
            <person name="Nelson W.C."/>
            <person name="Paulsen I.T."/>
            <person name="Heidelberg J.F."/>
            <person name="Holtzapple E.K."/>
            <person name="Khouri H.M."/>
            <person name="Federova N.B."/>
            <person name="Carty H.A."/>
            <person name="Umayam L.A."/>
            <person name="Haft D.H."/>
            <person name="Peterson J.D."/>
            <person name="Beanan M.J."/>
            <person name="White O."/>
            <person name="Salzberg S.L."/>
            <person name="Hsia R.-C."/>
            <person name="McClarty G."/>
            <person name="Rank R.G."/>
            <person name="Bavoil P.M."/>
            <person name="Fraser C.M."/>
        </authorList>
    </citation>
    <scope>NUCLEOTIDE SEQUENCE [LARGE SCALE GENOMIC DNA]</scope>
    <source>
        <strain>ATCC VR-813 / DSM 19441 / 03DC25 / GPIC</strain>
    </source>
</reference>
<proteinExistence type="inferred from homology"/>
<protein>
    <recommendedName>
        <fullName evidence="1">Large ribosomal subunit protein uL16</fullName>
    </recommendedName>
    <alternativeName>
        <fullName evidence="2">50S ribosomal protein L16</fullName>
    </alternativeName>
</protein>
<evidence type="ECO:0000255" key="1">
    <source>
        <dbReference type="HAMAP-Rule" id="MF_01342"/>
    </source>
</evidence>
<evidence type="ECO:0000305" key="2"/>